<name>ACCD_PELUB</name>
<keyword id="KW-0067">ATP-binding</keyword>
<keyword id="KW-0963">Cytoplasm</keyword>
<keyword id="KW-0275">Fatty acid biosynthesis</keyword>
<keyword id="KW-0276">Fatty acid metabolism</keyword>
<keyword id="KW-0444">Lipid biosynthesis</keyword>
<keyword id="KW-0443">Lipid metabolism</keyword>
<keyword id="KW-0479">Metal-binding</keyword>
<keyword id="KW-0547">Nucleotide-binding</keyword>
<keyword id="KW-1185">Reference proteome</keyword>
<keyword id="KW-0808">Transferase</keyword>
<keyword id="KW-0862">Zinc</keyword>
<keyword id="KW-0863">Zinc-finger</keyword>
<reference key="1">
    <citation type="journal article" date="2005" name="Science">
        <title>Genome streamlining in a cosmopolitan oceanic bacterium.</title>
        <authorList>
            <person name="Giovannoni S.J."/>
            <person name="Tripp H.J."/>
            <person name="Givan S."/>
            <person name="Podar M."/>
            <person name="Vergin K.L."/>
            <person name="Baptista D."/>
            <person name="Bibbs L."/>
            <person name="Eads J."/>
            <person name="Richardson T.H."/>
            <person name="Noordewier M."/>
            <person name="Rappe M.S."/>
            <person name="Short J.M."/>
            <person name="Carrington J.C."/>
            <person name="Mathur E.J."/>
        </authorList>
    </citation>
    <scope>NUCLEOTIDE SEQUENCE [LARGE SCALE GENOMIC DNA]</scope>
    <source>
        <strain>HTCC1062</strain>
    </source>
</reference>
<comment type="function">
    <text evidence="1">Component of the acetyl coenzyme A carboxylase (ACC) complex. Biotin carboxylase (BC) catalyzes the carboxylation of biotin on its carrier protein (BCCP) and then the CO(2) group is transferred by the transcarboxylase to acetyl-CoA to form malonyl-CoA.</text>
</comment>
<comment type="catalytic activity">
    <reaction evidence="1">
        <text>N(6)-carboxybiotinyl-L-lysyl-[protein] + acetyl-CoA = N(6)-biotinyl-L-lysyl-[protein] + malonyl-CoA</text>
        <dbReference type="Rhea" id="RHEA:54728"/>
        <dbReference type="Rhea" id="RHEA-COMP:10505"/>
        <dbReference type="Rhea" id="RHEA-COMP:10506"/>
        <dbReference type="ChEBI" id="CHEBI:57288"/>
        <dbReference type="ChEBI" id="CHEBI:57384"/>
        <dbReference type="ChEBI" id="CHEBI:83144"/>
        <dbReference type="ChEBI" id="CHEBI:83145"/>
        <dbReference type="EC" id="2.1.3.15"/>
    </reaction>
</comment>
<comment type="cofactor">
    <cofactor evidence="1">
        <name>Zn(2+)</name>
        <dbReference type="ChEBI" id="CHEBI:29105"/>
    </cofactor>
    <text evidence="1">Binds 1 zinc ion per subunit.</text>
</comment>
<comment type="pathway">
    <text evidence="1">Lipid metabolism; malonyl-CoA biosynthesis; malonyl-CoA from acetyl-CoA: step 1/1.</text>
</comment>
<comment type="subunit">
    <text evidence="1">Acetyl-CoA carboxylase is a heterohexamer composed of biotin carboxyl carrier protein (AccB), biotin carboxylase (AccC) and two subunits each of ACCase subunit alpha (AccA) and ACCase subunit beta (AccD).</text>
</comment>
<comment type="subcellular location">
    <subcellularLocation>
        <location evidence="1">Cytoplasm</location>
    </subcellularLocation>
</comment>
<comment type="similarity">
    <text evidence="1">Belongs to the AccD/PCCB family.</text>
</comment>
<comment type="caution">
    <text evidence="3">The spacing between the first 2 Cys is very close; it may not bind zinc.</text>
</comment>
<evidence type="ECO:0000255" key="1">
    <source>
        <dbReference type="HAMAP-Rule" id="MF_01395"/>
    </source>
</evidence>
<evidence type="ECO:0000255" key="2">
    <source>
        <dbReference type="PROSITE-ProRule" id="PRU01136"/>
    </source>
</evidence>
<evidence type="ECO:0000305" key="3"/>
<organism>
    <name type="scientific">Pelagibacter ubique (strain HTCC1062)</name>
    <dbReference type="NCBI Taxonomy" id="335992"/>
    <lineage>
        <taxon>Bacteria</taxon>
        <taxon>Pseudomonadati</taxon>
        <taxon>Pseudomonadota</taxon>
        <taxon>Alphaproteobacteria</taxon>
        <taxon>Candidatus Pelagibacterales</taxon>
        <taxon>Candidatus Pelagibacteraceae</taxon>
        <taxon>Candidatus Pelagibacter</taxon>
    </lineage>
</organism>
<gene>
    <name evidence="1" type="primary">accD</name>
    <name type="ordered locus">SAR11_0486</name>
</gene>
<proteinExistence type="inferred from homology"/>
<protein>
    <recommendedName>
        <fullName evidence="1">Acetyl-coenzyme A carboxylase carboxyl transferase subunit beta</fullName>
        <shortName evidence="1">ACCase subunit beta</shortName>
        <shortName evidence="1">Acetyl-CoA carboxylase carboxyltransferase subunit beta</shortName>
        <ecNumber evidence="1">2.1.3.15</ecNumber>
    </recommendedName>
</protein>
<dbReference type="EC" id="2.1.3.15" evidence="1"/>
<dbReference type="EMBL" id="CP000084">
    <property type="protein sequence ID" value="AAZ21308.1"/>
    <property type="molecule type" value="Genomic_DNA"/>
</dbReference>
<dbReference type="RefSeq" id="WP_011281746.1">
    <property type="nucleotide sequence ID" value="NC_007205.1"/>
</dbReference>
<dbReference type="SMR" id="Q4FND1"/>
<dbReference type="STRING" id="335992.SAR11_0486"/>
<dbReference type="GeneID" id="66294988"/>
<dbReference type="KEGG" id="pub:SAR11_0486"/>
<dbReference type="eggNOG" id="COG0777">
    <property type="taxonomic scope" value="Bacteria"/>
</dbReference>
<dbReference type="HOGENOM" id="CLU_015486_1_1_5"/>
<dbReference type="OrthoDB" id="9772975at2"/>
<dbReference type="UniPathway" id="UPA00655">
    <property type="reaction ID" value="UER00711"/>
</dbReference>
<dbReference type="Proteomes" id="UP000002528">
    <property type="component" value="Chromosome"/>
</dbReference>
<dbReference type="GO" id="GO:0009329">
    <property type="term" value="C:acetate CoA-transferase complex"/>
    <property type="evidence" value="ECO:0007669"/>
    <property type="project" value="TreeGrafter"/>
</dbReference>
<dbReference type="GO" id="GO:0003989">
    <property type="term" value="F:acetyl-CoA carboxylase activity"/>
    <property type="evidence" value="ECO:0007669"/>
    <property type="project" value="InterPro"/>
</dbReference>
<dbReference type="GO" id="GO:0005524">
    <property type="term" value="F:ATP binding"/>
    <property type="evidence" value="ECO:0007669"/>
    <property type="project" value="UniProtKB-KW"/>
</dbReference>
<dbReference type="GO" id="GO:0016743">
    <property type="term" value="F:carboxyl- or carbamoyltransferase activity"/>
    <property type="evidence" value="ECO:0007669"/>
    <property type="project" value="UniProtKB-UniRule"/>
</dbReference>
<dbReference type="GO" id="GO:0008270">
    <property type="term" value="F:zinc ion binding"/>
    <property type="evidence" value="ECO:0007669"/>
    <property type="project" value="UniProtKB-UniRule"/>
</dbReference>
<dbReference type="GO" id="GO:0006633">
    <property type="term" value="P:fatty acid biosynthetic process"/>
    <property type="evidence" value="ECO:0007669"/>
    <property type="project" value="UniProtKB-KW"/>
</dbReference>
<dbReference type="GO" id="GO:2001295">
    <property type="term" value="P:malonyl-CoA biosynthetic process"/>
    <property type="evidence" value="ECO:0007669"/>
    <property type="project" value="UniProtKB-UniRule"/>
</dbReference>
<dbReference type="Gene3D" id="3.90.226.10">
    <property type="entry name" value="2-enoyl-CoA Hydratase, Chain A, domain 1"/>
    <property type="match status" value="1"/>
</dbReference>
<dbReference type="HAMAP" id="MF_01395">
    <property type="entry name" value="AcetylCoA_CT_beta"/>
    <property type="match status" value="1"/>
</dbReference>
<dbReference type="InterPro" id="IPR034733">
    <property type="entry name" value="AcCoA_carboxyl_beta"/>
</dbReference>
<dbReference type="InterPro" id="IPR000438">
    <property type="entry name" value="Acetyl_CoA_COase_Trfase_b_su"/>
</dbReference>
<dbReference type="InterPro" id="IPR029045">
    <property type="entry name" value="ClpP/crotonase-like_dom_sf"/>
</dbReference>
<dbReference type="InterPro" id="IPR011762">
    <property type="entry name" value="COA_CT_N"/>
</dbReference>
<dbReference type="PANTHER" id="PTHR42995">
    <property type="entry name" value="ACETYL-COENZYME A CARBOXYLASE CARBOXYL TRANSFERASE SUBUNIT BETA, CHLOROPLASTIC"/>
    <property type="match status" value="1"/>
</dbReference>
<dbReference type="PANTHER" id="PTHR42995:SF5">
    <property type="entry name" value="ACETYL-COENZYME A CARBOXYLASE CARBOXYL TRANSFERASE SUBUNIT BETA, CHLOROPLASTIC"/>
    <property type="match status" value="1"/>
</dbReference>
<dbReference type="Pfam" id="PF01039">
    <property type="entry name" value="Carboxyl_trans"/>
    <property type="match status" value="1"/>
</dbReference>
<dbReference type="PRINTS" id="PR01070">
    <property type="entry name" value="ACCCTRFRASEB"/>
</dbReference>
<dbReference type="SUPFAM" id="SSF52096">
    <property type="entry name" value="ClpP/crotonase"/>
    <property type="match status" value="1"/>
</dbReference>
<dbReference type="PROSITE" id="PS50980">
    <property type="entry name" value="COA_CT_NTER"/>
    <property type="match status" value="1"/>
</dbReference>
<sequence>MNWIKKTLRFGEKIKTIIKARATKTEIANSDWTSCCKGPILKKDLEENLWVCPSCNKHHRISPRQRFDIIFGKNNYEVLKTPIPQDDPLNWNDAKPYKDRLKAARKKTGMDCGMMVVNTNILNLKITAIASDFDFVGGSIGAAEGEAFLYGIQHAIENEQPFVVFTSGGGMRMMESLISLSQMTRTTLAINELKKNNLPYIVVLTDPTAGGITASYAMLGDLHLAEPGALIAFAGARVIQGTVREELPEGFQRSEYVEKTGFVDLIVERKDLREKIGSLLSILLKKNSAINSSENETSEDSRALTKAAS</sequence>
<accession>Q4FND1</accession>
<feature type="chain" id="PRO_0000389813" description="Acetyl-coenzyme A carboxylase carboxyl transferase subunit beta">
    <location>
        <begin position="1"/>
        <end position="309"/>
    </location>
</feature>
<feature type="domain" description="CoA carboxyltransferase N-terminal" evidence="2">
    <location>
        <begin position="29"/>
        <end position="298"/>
    </location>
</feature>
<feature type="binding site" evidence="1">
    <location>
        <position position="35"/>
    </location>
    <ligand>
        <name>Zn(2+)</name>
        <dbReference type="ChEBI" id="CHEBI:29105"/>
    </ligand>
</feature>
<feature type="binding site" evidence="1">
    <location>
        <position position="36"/>
    </location>
    <ligand>
        <name>Zn(2+)</name>
        <dbReference type="ChEBI" id="CHEBI:29105"/>
    </ligand>
</feature>
<feature type="binding site" evidence="1">
    <location>
        <position position="52"/>
    </location>
    <ligand>
        <name>Zn(2+)</name>
        <dbReference type="ChEBI" id="CHEBI:29105"/>
    </ligand>
</feature>
<feature type="binding site" evidence="1">
    <location>
        <position position="55"/>
    </location>
    <ligand>
        <name>Zn(2+)</name>
        <dbReference type="ChEBI" id="CHEBI:29105"/>
    </ligand>
</feature>